<protein>
    <recommendedName>
        <fullName evidence="5">Exo-alpha-sialidase ARB_03431</fullName>
        <ecNumber evidence="1">3.2.1.18</ecNumber>
    </recommendedName>
    <alternativeName>
        <fullName evidence="5">Alpha-neuraminidase ARB_03431</fullName>
    </alternativeName>
    <alternativeName>
        <fullName evidence="5">N-acylneuraminate glycohydrolase ARB_03431</fullName>
    </alternativeName>
</protein>
<reference key="1">
    <citation type="journal article" date="2011" name="Genome Biol.">
        <title>Comparative and functional genomics provide insights into the pathogenicity of dermatophytic fungi.</title>
        <authorList>
            <person name="Burmester A."/>
            <person name="Shelest E."/>
            <person name="Gloeckner G."/>
            <person name="Heddergott C."/>
            <person name="Schindler S."/>
            <person name="Staib P."/>
            <person name="Heidel A."/>
            <person name="Felder M."/>
            <person name="Petzold A."/>
            <person name="Szafranski K."/>
            <person name="Feuermann M."/>
            <person name="Pedruzzi I."/>
            <person name="Priebe S."/>
            <person name="Groth M."/>
            <person name="Winkler R."/>
            <person name="Li W."/>
            <person name="Kniemeyer O."/>
            <person name="Schroeckh V."/>
            <person name="Hertweck C."/>
            <person name="Hube B."/>
            <person name="White T.C."/>
            <person name="Platzer M."/>
            <person name="Guthke R."/>
            <person name="Heitman J."/>
            <person name="Woestemeyer J."/>
            <person name="Zipfel P.F."/>
            <person name="Monod M."/>
            <person name="Brakhage A.A."/>
        </authorList>
    </citation>
    <scope>NUCLEOTIDE SEQUENCE [LARGE SCALE GENOMIC DNA]</scope>
    <source>
        <strain>ATCC MYA-4681 / CBS 112371</strain>
    </source>
</reference>
<reference key="2">
    <citation type="journal article" date="2011" name="Proteomics">
        <title>Identification of novel secreted proteases during extracellular proteolysis by dermatophytes at acidic pH.</title>
        <authorList>
            <person name="Sriranganadane D."/>
            <person name="Waridel P."/>
            <person name="Salamin K."/>
            <person name="Feuermann M."/>
            <person name="Mignon B."/>
            <person name="Staib P."/>
            <person name="Neuhaus J.M."/>
            <person name="Quadroni M."/>
            <person name="Monod M."/>
        </authorList>
    </citation>
    <scope>IDENTIFICATION BY MASS SPECTROMETRY</scope>
    <scope>SUBCELLULAR LOCATION</scope>
</reference>
<organism>
    <name type="scientific">Arthroderma benhamiae (strain ATCC MYA-4681 / CBS 112371)</name>
    <name type="common">Trichophyton mentagrophytes</name>
    <dbReference type="NCBI Taxonomy" id="663331"/>
    <lineage>
        <taxon>Eukaryota</taxon>
        <taxon>Fungi</taxon>
        <taxon>Dikarya</taxon>
        <taxon>Ascomycota</taxon>
        <taxon>Pezizomycotina</taxon>
        <taxon>Eurotiomycetes</taxon>
        <taxon>Eurotiomycetidae</taxon>
        <taxon>Onygenales</taxon>
        <taxon>Arthrodermataceae</taxon>
        <taxon>Trichophyton</taxon>
    </lineage>
</organism>
<proteinExistence type="evidence at protein level"/>
<accession>D4B4P1</accession>
<keyword id="KW-0119">Carbohydrate metabolism</keyword>
<keyword id="KW-0325">Glycoprotein</keyword>
<keyword id="KW-0326">Glycosidase</keyword>
<keyword id="KW-0378">Hydrolase</keyword>
<keyword id="KW-1185">Reference proteome</keyword>
<keyword id="KW-0964">Secreted</keyword>
<keyword id="KW-0732">Signal</keyword>
<name>SIA_ARTBC</name>
<gene>
    <name type="ORF">ARB_03431</name>
</gene>
<comment type="function">
    <text evidence="1">Sialidase is able to release sialic acid from a wide variety of natural substrates.</text>
</comment>
<comment type="catalytic activity">
    <reaction evidence="1">
        <text>Hydrolysis of alpha-(2-&gt;3)-, alpha-(2-&gt;6)-, alpha-(2-&gt;8)- glycosidic linkages of terminal sialic acid residues in oligosaccharides, glycoproteins, glycolipids, colominic acid and synthetic substrates.</text>
        <dbReference type="EC" id="3.2.1.18"/>
    </reaction>
</comment>
<comment type="subcellular location">
    <subcellularLocation>
        <location evidence="4">Secreted</location>
    </subcellularLocation>
</comment>
<comment type="similarity">
    <text evidence="5">Belongs to the glycosyl hydrolase 33 family.</text>
</comment>
<feature type="signal peptide" evidence="2">
    <location>
        <begin position="1"/>
        <end position="22"/>
    </location>
</feature>
<feature type="chain" id="PRO_5003054503" description="Exo-alpha-sialidase ARB_03431">
    <location>
        <begin position="23"/>
        <end position="408"/>
    </location>
</feature>
<feature type="binding site" evidence="1">
    <location>
        <position position="62"/>
    </location>
    <ligand>
        <name>substrate</name>
    </ligand>
</feature>
<feature type="binding site" evidence="1">
    <location>
        <position position="81"/>
    </location>
    <ligand>
        <name>substrate</name>
    </ligand>
</feature>
<feature type="binding site" evidence="1">
    <location>
        <position position="87"/>
    </location>
    <ligand>
        <name>substrate</name>
    </ligand>
</feature>
<feature type="binding site" evidence="1">
    <location>
        <position position="150"/>
    </location>
    <ligand>
        <name>substrate</name>
    </ligand>
</feature>
<feature type="binding site" evidence="1">
    <location>
        <position position="267"/>
    </location>
    <ligand>
        <name>substrate</name>
    </ligand>
</feature>
<feature type="binding site" evidence="1">
    <location>
        <begin position="324"/>
        <end position="325"/>
    </location>
    <ligand>
        <name>substrate</name>
    </ligand>
</feature>
<feature type="binding site" evidence="1">
    <location>
        <position position="324"/>
    </location>
    <ligand>
        <name>substrate</name>
    </ligand>
</feature>
<feature type="binding site" evidence="1">
    <location>
        <begin position="333"/>
        <end position="334"/>
    </location>
    <ligand>
        <name>substrate</name>
    </ligand>
</feature>
<feature type="binding site" evidence="1">
    <location>
        <position position="339"/>
    </location>
    <ligand>
        <name>substrate</name>
    </ligand>
</feature>
<feature type="binding site" evidence="1">
    <location>
        <position position="360"/>
    </location>
    <ligand>
        <name>substrate</name>
    </ligand>
</feature>
<feature type="binding site" evidence="1">
    <location>
        <begin position="378"/>
        <end position="380"/>
    </location>
    <ligand>
        <name>substrate</name>
    </ligand>
</feature>
<feature type="binding site" evidence="1">
    <location>
        <position position="378"/>
    </location>
    <ligand>
        <name>substrate</name>
    </ligand>
</feature>
<feature type="glycosylation site" description="N-linked (GlcNAc...) asparagine" evidence="3">
    <location>
        <position position="237"/>
    </location>
</feature>
<feature type="glycosylation site" description="N-linked (GlcNAc...) asparagine" evidence="3">
    <location>
        <position position="398"/>
    </location>
</feature>
<sequence length="408" mass="44403">MGIKQWLLSLVVVAISATATQARVDDPAGKAAQYHKEYALFRSANMPSPDKLASGVGFHSFRIPAVVRTNTGRILAFAEGRRHNNRDYGDINLVYKRTKSPTNNGENPTDWESLREVVGTGPHTWGNPTPVVDGNTIYLFLSMNDGAYSQNGGNTLPDGTKTKTIDSTWVGRRHLYLTTSTDDGDTWTKPVDMTKTLTPDGQAWDAVGPGNGIKLSTGELVIPAQGRNIIGHGPSGNRTWSMQVLKGAGSEGTICQTPDGKLMRNDRPGPMGHRSVARGTLAGFGPFATDNGLPDPACQGSILSYNSDEPARTIFMNSASTDRRTAMRVRISYDKDAAKFNFGRELKDAPLGNVGNEGGYSSMTKTSDYKIGALVESDWYEDKGGEKSHRCIIWRRFNLSWIINGPNN</sequence>
<dbReference type="EC" id="3.2.1.18" evidence="1"/>
<dbReference type="EMBL" id="ABSU01000034">
    <property type="protein sequence ID" value="EFE30089.1"/>
    <property type="molecule type" value="Genomic_DNA"/>
</dbReference>
<dbReference type="RefSeq" id="XP_003010729.1">
    <property type="nucleotide sequence ID" value="XM_003010683.1"/>
</dbReference>
<dbReference type="SMR" id="D4B4P1"/>
<dbReference type="GeneID" id="9524842"/>
<dbReference type="KEGG" id="abe:ARB_03431"/>
<dbReference type="eggNOG" id="ENOG502QSIT">
    <property type="taxonomic scope" value="Eukaryota"/>
</dbReference>
<dbReference type="HOGENOM" id="CLU_024620_1_0_1"/>
<dbReference type="OMA" id="RTIFMNS"/>
<dbReference type="OrthoDB" id="2739686at2759"/>
<dbReference type="Proteomes" id="UP000008866">
    <property type="component" value="Unassembled WGS sequence"/>
</dbReference>
<dbReference type="GO" id="GO:0005737">
    <property type="term" value="C:cytoplasm"/>
    <property type="evidence" value="ECO:0007669"/>
    <property type="project" value="TreeGrafter"/>
</dbReference>
<dbReference type="GO" id="GO:0005576">
    <property type="term" value="C:extracellular region"/>
    <property type="evidence" value="ECO:0007669"/>
    <property type="project" value="UniProtKB-SubCell"/>
</dbReference>
<dbReference type="GO" id="GO:0043231">
    <property type="term" value="C:intracellular membrane-bounded organelle"/>
    <property type="evidence" value="ECO:0007669"/>
    <property type="project" value="TreeGrafter"/>
</dbReference>
<dbReference type="GO" id="GO:0016020">
    <property type="term" value="C:membrane"/>
    <property type="evidence" value="ECO:0007669"/>
    <property type="project" value="TreeGrafter"/>
</dbReference>
<dbReference type="GO" id="GO:0004308">
    <property type="term" value="F:exo-alpha-sialidase activity"/>
    <property type="evidence" value="ECO:0007669"/>
    <property type="project" value="UniProtKB-EC"/>
</dbReference>
<dbReference type="GO" id="GO:0006689">
    <property type="term" value="P:ganglioside catabolic process"/>
    <property type="evidence" value="ECO:0007669"/>
    <property type="project" value="TreeGrafter"/>
</dbReference>
<dbReference type="GO" id="GO:0009313">
    <property type="term" value="P:oligosaccharide catabolic process"/>
    <property type="evidence" value="ECO:0007669"/>
    <property type="project" value="TreeGrafter"/>
</dbReference>
<dbReference type="FunFam" id="2.120.10.10:FF:000008">
    <property type="entry name" value="Exo-alpha-sialidase"/>
    <property type="match status" value="1"/>
</dbReference>
<dbReference type="Gene3D" id="2.120.10.10">
    <property type="match status" value="1"/>
</dbReference>
<dbReference type="InterPro" id="IPR011040">
    <property type="entry name" value="Sialidase"/>
</dbReference>
<dbReference type="InterPro" id="IPR026856">
    <property type="entry name" value="Sialidase_fam"/>
</dbReference>
<dbReference type="InterPro" id="IPR036278">
    <property type="entry name" value="Sialidase_sf"/>
</dbReference>
<dbReference type="PANTHER" id="PTHR10628:SF30">
    <property type="entry name" value="EXO-ALPHA-SIALIDASE"/>
    <property type="match status" value="1"/>
</dbReference>
<dbReference type="PANTHER" id="PTHR10628">
    <property type="entry name" value="SIALIDASE"/>
    <property type="match status" value="1"/>
</dbReference>
<dbReference type="Pfam" id="PF13859">
    <property type="entry name" value="BNR_3"/>
    <property type="match status" value="1"/>
</dbReference>
<dbReference type="SUPFAM" id="SSF50939">
    <property type="entry name" value="Sialidases"/>
    <property type="match status" value="1"/>
</dbReference>
<evidence type="ECO:0000250" key="1">
    <source>
        <dbReference type="UniProtKB" id="Q4WQS0"/>
    </source>
</evidence>
<evidence type="ECO:0000255" key="2"/>
<evidence type="ECO:0000255" key="3">
    <source>
        <dbReference type="PROSITE-ProRule" id="PRU00498"/>
    </source>
</evidence>
<evidence type="ECO:0000269" key="4">
    <source>
    </source>
</evidence>
<evidence type="ECO:0000305" key="5"/>